<gene>
    <name type="primary">rpmJ</name>
    <name type="ordered locus">Atu3756.1</name>
    <name type="ORF">AGR_L_2154</name>
</gene>
<reference key="1">
    <citation type="journal article" date="2001" name="Science">
        <title>The genome of the natural genetic engineer Agrobacterium tumefaciens C58.</title>
        <authorList>
            <person name="Wood D.W."/>
            <person name="Setubal J.C."/>
            <person name="Kaul R."/>
            <person name="Monks D.E."/>
            <person name="Kitajima J.P."/>
            <person name="Okura V.K."/>
            <person name="Zhou Y."/>
            <person name="Chen L."/>
            <person name="Wood G.E."/>
            <person name="Almeida N.F. Jr."/>
            <person name="Woo L."/>
            <person name="Chen Y."/>
            <person name="Paulsen I.T."/>
            <person name="Eisen J.A."/>
            <person name="Karp P.D."/>
            <person name="Bovee D. Sr."/>
            <person name="Chapman P."/>
            <person name="Clendenning J."/>
            <person name="Deatherage G."/>
            <person name="Gillet W."/>
            <person name="Grant C."/>
            <person name="Kutyavin T."/>
            <person name="Levy R."/>
            <person name="Li M.-J."/>
            <person name="McClelland E."/>
            <person name="Palmieri A."/>
            <person name="Raymond C."/>
            <person name="Rouse G."/>
            <person name="Saenphimmachak C."/>
            <person name="Wu Z."/>
            <person name="Romero P."/>
            <person name="Gordon D."/>
            <person name="Zhang S."/>
            <person name="Yoo H."/>
            <person name="Tao Y."/>
            <person name="Biddle P."/>
            <person name="Jung M."/>
            <person name="Krespan W."/>
            <person name="Perry M."/>
            <person name="Gordon-Kamm B."/>
            <person name="Liao L."/>
            <person name="Kim S."/>
            <person name="Hendrick C."/>
            <person name="Zhao Z.-Y."/>
            <person name="Dolan M."/>
            <person name="Chumley F."/>
            <person name="Tingey S.V."/>
            <person name="Tomb J.-F."/>
            <person name="Gordon M.P."/>
            <person name="Olson M.V."/>
            <person name="Nester E.W."/>
        </authorList>
    </citation>
    <scope>NUCLEOTIDE SEQUENCE [LARGE SCALE GENOMIC DNA]</scope>
    <source>
        <strain>C58 / ATCC 33970</strain>
    </source>
</reference>
<reference key="2">
    <citation type="journal article" date="2001" name="Science">
        <title>Genome sequence of the plant pathogen and biotechnology agent Agrobacterium tumefaciens C58.</title>
        <authorList>
            <person name="Goodner B."/>
            <person name="Hinkle G."/>
            <person name="Gattung S."/>
            <person name="Miller N."/>
            <person name="Blanchard M."/>
            <person name="Qurollo B."/>
            <person name="Goldman B.S."/>
            <person name="Cao Y."/>
            <person name="Askenazi M."/>
            <person name="Halling C."/>
            <person name="Mullin L."/>
            <person name="Houmiel K."/>
            <person name="Gordon J."/>
            <person name="Vaudin M."/>
            <person name="Iartchouk O."/>
            <person name="Epp A."/>
            <person name="Liu F."/>
            <person name="Wollam C."/>
            <person name="Allinger M."/>
            <person name="Doughty D."/>
            <person name="Scott C."/>
            <person name="Lappas C."/>
            <person name="Markelz B."/>
            <person name="Flanagan C."/>
            <person name="Crowell C."/>
            <person name="Gurson J."/>
            <person name="Lomo C."/>
            <person name="Sear C."/>
            <person name="Strub G."/>
            <person name="Cielo C."/>
            <person name="Slater S."/>
        </authorList>
    </citation>
    <scope>NUCLEOTIDE SEQUENCE [LARGE SCALE GENOMIC DNA]</scope>
    <source>
        <strain>C58 / ATCC 33970</strain>
    </source>
</reference>
<reference key="3">
    <citation type="journal article" date="2005" name="Bioinformatics">
        <title>Improving genome annotations using phylogenetic profile anomaly detection.</title>
        <authorList>
            <person name="Mikkelsen T.S."/>
            <person name="Galagan J.E."/>
            <person name="Mesirov J.P."/>
        </authorList>
    </citation>
    <scope>IDENTIFICATION</scope>
</reference>
<feature type="chain" id="PRO_0000126139" description="Large ribosomal subunit protein bL36">
    <location>
        <begin position="1"/>
        <end position="41"/>
    </location>
</feature>
<proteinExistence type="inferred from homology"/>
<organism>
    <name type="scientific">Agrobacterium fabrum (strain C58 / ATCC 33970)</name>
    <name type="common">Agrobacterium tumefaciens (strain C58)</name>
    <dbReference type="NCBI Taxonomy" id="176299"/>
    <lineage>
        <taxon>Bacteria</taxon>
        <taxon>Pseudomonadati</taxon>
        <taxon>Pseudomonadota</taxon>
        <taxon>Alphaproteobacteria</taxon>
        <taxon>Hyphomicrobiales</taxon>
        <taxon>Rhizobiaceae</taxon>
        <taxon>Rhizobium/Agrobacterium group</taxon>
        <taxon>Agrobacterium</taxon>
        <taxon>Agrobacterium tumefaciens complex</taxon>
    </lineage>
</organism>
<sequence>MKIKNSLKALKARHRDNRLVRRKGRVYIINKQNPRFKARQG</sequence>
<name>RL36_AGRFC</name>
<comment type="similarity">
    <text evidence="1">Belongs to the bacterial ribosomal protein bL36 family.</text>
</comment>
<dbReference type="EMBL" id="AE007870">
    <property type="protein sequence ID" value="ABW89720.1"/>
    <property type="molecule type" value="Genomic_DNA"/>
</dbReference>
<dbReference type="RefSeq" id="YP_001542598.1">
    <property type="nucleotide sequence ID" value="NC_003063.2"/>
</dbReference>
<dbReference type="SMR" id="P68993"/>
<dbReference type="STRING" id="176299.Atu8067"/>
<dbReference type="EnsemblBacteria" id="ABW89720">
    <property type="protein sequence ID" value="ABW89720"/>
    <property type="gene ID" value="Atu8067"/>
</dbReference>
<dbReference type="KEGG" id="atu:Atu8067"/>
<dbReference type="PATRIC" id="fig|176299.10.peg.3591"/>
<dbReference type="eggNOG" id="COG0257">
    <property type="taxonomic scope" value="Bacteria"/>
</dbReference>
<dbReference type="HOGENOM" id="CLU_135723_3_2_5"/>
<dbReference type="OrthoDB" id="9801558at2"/>
<dbReference type="PhylomeDB" id="P68993"/>
<dbReference type="PRO" id="PR:P68993"/>
<dbReference type="Proteomes" id="UP000000813">
    <property type="component" value="Chromosome linear"/>
</dbReference>
<dbReference type="GO" id="GO:1990904">
    <property type="term" value="C:ribonucleoprotein complex"/>
    <property type="evidence" value="ECO:0007669"/>
    <property type="project" value="UniProtKB-KW"/>
</dbReference>
<dbReference type="GO" id="GO:0005840">
    <property type="term" value="C:ribosome"/>
    <property type="evidence" value="ECO:0007669"/>
    <property type="project" value="UniProtKB-KW"/>
</dbReference>
<dbReference type="GO" id="GO:0003735">
    <property type="term" value="F:structural constituent of ribosome"/>
    <property type="evidence" value="ECO:0007669"/>
    <property type="project" value="InterPro"/>
</dbReference>
<dbReference type="GO" id="GO:0006412">
    <property type="term" value="P:translation"/>
    <property type="evidence" value="ECO:0007669"/>
    <property type="project" value="UniProtKB-UniRule"/>
</dbReference>
<dbReference type="HAMAP" id="MF_00251">
    <property type="entry name" value="Ribosomal_bL36"/>
    <property type="match status" value="1"/>
</dbReference>
<dbReference type="InterPro" id="IPR000473">
    <property type="entry name" value="Ribosomal_bL36"/>
</dbReference>
<dbReference type="InterPro" id="IPR035977">
    <property type="entry name" value="Ribosomal_bL36_sp"/>
</dbReference>
<dbReference type="InterPro" id="IPR047621">
    <property type="entry name" value="Ribosomal_L36_bact"/>
</dbReference>
<dbReference type="NCBIfam" id="NF002021">
    <property type="entry name" value="PRK00831.1"/>
    <property type="match status" value="1"/>
</dbReference>
<dbReference type="NCBIfam" id="TIGR01022">
    <property type="entry name" value="rpmJ_bact"/>
    <property type="match status" value="1"/>
</dbReference>
<dbReference type="PANTHER" id="PTHR47781">
    <property type="entry name" value="50S RIBOSOMAL PROTEIN L36 2"/>
    <property type="match status" value="1"/>
</dbReference>
<dbReference type="PANTHER" id="PTHR47781:SF1">
    <property type="entry name" value="LARGE RIBOSOMAL SUBUNIT PROTEIN BL36B"/>
    <property type="match status" value="1"/>
</dbReference>
<dbReference type="Pfam" id="PF00444">
    <property type="entry name" value="Ribosomal_L36"/>
    <property type="match status" value="1"/>
</dbReference>
<dbReference type="SUPFAM" id="SSF57840">
    <property type="entry name" value="Ribosomal protein L36"/>
    <property type="match status" value="1"/>
</dbReference>
<dbReference type="PROSITE" id="PS00828">
    <property type="entry name" value="RIBOSOMAL_L36"/>
    <property type="match status" value="1"/>
</dbReference>
<protein>
    <recommendedName>
        <fullName evidence="1">Large ribosomal subunit protein bL36</fullName>
    </recommendedName>
    <alternativeName>
        <fullName>50S ribosomal protein L36</fullName>
    </alternativeName>
</protein>
<evidence type="ECO:0000305" key="1"/>
<keyword id="KW-1185">Reference proteome</keyword>
<keyword id="KW-0687">Ribonucleoprotein</keyword>
<keyword id="KW-0689">Ribosomal protein</keyword>
<accession>P68993</accession>
<accession>A8WFG5</accession>